<dbReference type="EC" id="5.5.1.4" evidence="5"/>
<dbReference type="EMBL" id="BC111160">
    <property type="protein sequence ID" value="AAI11161.1"/>
    <property type="molecule type" value="mRNA"/>
</dbReference>
<dbReference type="RefSeq" id="NP_001039497.1">
    <property type="nucleotide sequence ID" value="NM_001046032.2"/>
</dbReference>
<dbReference type="SMR" id="Q2NL29"/>
<dbReference type="FunCoup" id="Q2NL29">
    <property type="interactions" value="1227"/>
</dbReference>
<dbReference type="STRING" id="9913.ENSBTAP00000023241"/>
<dbReference type="PaxDb" id="9913-ENSBTAP00000023241"/>
<dbReference type="GeneID" id="509394"/>
<dbReference type="KEGG" id="bta:509394"/>
<dbReference type="CTD" id="51477"/>
<dbReference type="VEuPathDB" id="HostDB:ENSBTAG00000017482"/>
<dbReference type="eggNOG" id="KOG0693">
    <property type="taxonomic scope" value="Eukaryota"/>
</dbReference>
<dbReference type="HOGENOM" id="CLU_021486_2_1_1"/>
<dbReference type="InParanoid" id="Q2NL29"/>
<dbReference type="OMA" id="VYVPMKE"/>
<dbReference type="OrthoDB" id="2887at2759"/>
<dbReference type="TreeFam" id="TF300382"/>
<dbReference type="Reactome" id="R-BTA-1855183">
    <property type="pathway name" value="Synthesis of IP2, IP, and Ins in the cytosol"/>
</dbReference>
<dbReference type="UniPathway" id="UPA00823">
    <property type="reaction ID" value="UER00787"/>
</dbReference>
<dbReference type="Proteomes" id="UP000009136">
    <property type="component" value="Chromosome 7"/>
</dbReference>
<dbReference type="Bgee" id="ENSBTAG00000017482">
    <property type="expression patterns" value="Expressed in spermatocyte and 108 other cell types or tissues"/>
</dbReference>
<dbReference type="GO" id="GO:0005737">
    <property type="term" value="C:cytoplasm"/>
    <property type="evidence" value="ECO:0000318"/>
    <property type="project" value="GO_Central"/>
</dbReference>
<dbReference type="GO" id="GO:0004512">
    <property type="term" value="F:inositol-3-phosphate synthase activity"/>
    <property type="evidence" value="ECO:0000318"/>
    <property type="project" value="GO_Central"/>
</dbReference>
<dbReference type="GO" id="GO:0006021">
    <property type="term" value="P:inositol biosynthetic process"/>
    <property type="evidence" value="ECO:0000318"/>
    <property type="project" value="GO_Central"/>
</dbReference>
<dbReference type="GO" id="GO:0008654">
    <property type="term" value="P:phospholipid biosynthetic process"/>
    <property type="evidence" value="ECO:0007669"/>
    <property type="project" value="UniProtKB-KW"/>
</dbReference>
<dbReference type="FunFam" id="3.40.50.720:FF:000069">
    <property type="entry name" value="Inositol-3-phosphate synthase 1"/>
    <property type="match status" value="1"/>
</dbReference>
<dbReference type="FunFam" id="3.40.50.720:FF:000171">
    <property type="entry name" value="inositol-3-phosphate synthase 1"/>
    <property type="match status" value="1"/>
</dbReference>
<dbReference type="Gene3D" id="3.40.50.720">
    <property type="entry name" value="NAD(P)-binding Rossmann-like Domain"/>
    <property type="match status" value="2"/>
</dbReference>
<dbReference type="InterPro" id="IPR002587">
    <property type="entry name" value="Myo-inos-1-P_Synthase"/>
</dbReference>
<dbReference type="InterPro" id="IPR013021">
    <property type="entry name" value="Myo-inos-1-P_Synthase_GAPDH"/>
</dbReference>
<dbReference type="InterPro" id="IPR036291">
    <property type="entry name" value="NAD(P)-bd_dom_sf"/>
</dbReference>
<dbReference type="PANTHER" id="PTHR11510">
    <property type="entry name" value="MYO-INOSITOL-1 PHOSPHATE SYNTHASE"/>
    <property type="match status" value="1"/>
</dbReference>
<dbReference type="Pfam" id="PF01658">
    <property type="entry name" value="Inos-1-P_synth"/>
    <property type="match status" value="1"/>
</dbReference>
<dbReference type="Pfam" id="PF07994">
    <property type="entry name" value="NAD_binding_5"/>
    <property type="match status" value="1"/>
</dbReference>
<dbReference type="PIRSF" id="PIRSF015578">
    <property type="entry name" value="Myoinos-ppht_syn"/>
    <property type="match status" value="1"/>
</dbReference>
<dbReference type="SUPFAM" id="SSF55347">
    <property type="entry name" value="Glyceraldehyde-3-phosphate dehydrogenase-like, C-terminal domain"/>
    <property type="match status" value="1"/>
</dbReference>
<dbReference type="SUPFAM" id="SSF51735">
    <property type="entry name" value="NAD(P)-binding Rossmann-fold domains"/>
    <property type="match status" value="1"/>
</dbReference>
<protein>
    <recommendedName>
        <fullName>Inositol-3-phosphate synthase 1</fullName>
        <shortName>IPS 1</shortName>
        <ecNumber evidence="5">5.5.1.4</ecNumber>
    </recommendedName>
    <alternativeName>
        <fullName>Myo-inositol 1-phosphate synthase</fullName>
        <shortName>MI-1-P synthase</shortName>
        <shortName>MIP synthase</shortName>
    </alternativeName>
</protein>
<organism>
    <name type="scientific">Bos taurus</name>
    <name type="common">Bovine</name>
    <dbReference type="NCBI Taxonomy" id="9913"/>
    <lineage>
        <taxon>Eukaryota</taxon>
        <taxon>Metazoa</taxon>
        <taxon>Chordata</taxon>
        <taxon>Craniata</taxon>
        <taxon>Vertebrata</taxon>
        <taxon>Euteleostomi</taxon>
        <taxon>Mammalia</taxon>
        <taxon>Eutheria</taxon>
        <taxon>Laurasiatheria</taxon>
        <taxon>Artiodactyla</taxon>
        <taxon>Ruminantia</taxon>
        <taxon>Pecora</taxon>
        <taxon>Bovidae</taxon>
        <taxon>Bovinae</taxon>
        <taxon>Bos</taxon>
    </lineage>
</organism>
<comment type="function">
    <text evidence="3 5">Key enzyme in myo-inositol biosynthesis pathway that catalyzes the conversion of glucose 6-phosphate to 1-myo-inositol 1-phosphate in a NAD-dependent manner (PubMed:885873). Rate-limiting enzyme in the synthesis of all inositol-containing compounds (By similarity).</text>
</comment>
<comment type="catalytic activity">
    <reaction evidence="5">
        <text>D-glucose 6-phosphate = 1D-myo-inositol 3-phosphate</text>
        <dbReference type="Rhea" id="RHEA:10716"/>
        <dbReference type="ChEBI" id="CHEBI:58401"/>
        <dbReference type="ChEBI" id="CHEBI:61548"/>
        <dbReference type="EC" id="5.5.1.4"/>
    </reaction>
</comment>
<comment type="cofactor">
    <cofactor evidence="5">
        <name>NAD(+)</name>
        <dbReference type="ChEBI" id="CHEBI:57540"/>
    </cofactor>
</comment>
<comment type="pathway">
    <text>Polyol metabolism; myo-inositol biosynthesis; myo-inositol from D-glucose 6-phosphate: step 1/2.</text>
</comment>
<comment type="subcellular location">
    <subcellularLocation>
        <location evidence="1">Cytoplasm</location>
    </subcellularLocation>
</comment>
<comment type="tissue specificity">
    <text evidence="5">Expressed in testis (at protein level).</text>
</comment>
<comment type="similarity">
    <text evidence="6">Belongs to the myo-inositol 1-phosphate synthase family.</text>
</comment>
<name>INO1_BOVIN</name>
<gene>
    <name type="primary">ISYNA1</name>
    <name type="synonym">INO1</name>
</gene>
<sequence>MEAATEFVVESPDVVYSPETIEAQYEYRTTSVSREGGVLKVHPTSTRFTFRTARQVPRLGVMLVGWGGNNGSTLTAAVLANRLRLSWPTRTGRKEANYYGSLTQAGTVSLGLDAEGKEVFVPFSSLLPMVAPDDLVFDGWDISSLNLAEAMRRAQVLDWGLQEQLWPHMEAMRPRPSVYIPEFIAANQSARADNVIPGTRAQQLEQIRRDIRDFRFSAGLDKVIVLWTANTERFCEVIPGLNDTAENLLRTIQLGLEVSPSTLFAVASILEGCAFLNGSPQNTLVPGALELAWQRRVFVGGDDFKSGQTKVKSVLVDFLIGSGLKTMSIVSYNHLGNNDGQNLSAPPQFRSKEVSKSSVVDDMVHSNPVLYSPGEQPDHCVVIKYVPYVGDSKRALDEYTSELMLGGTNTLVLHNTCEDSLLAAPIMLDLALLTELCQRVSFCTDVDPDPQSFHPVLSLLGFLFKAPLAPPGSPVVNALFRQRSCIENILRACVGLPPQNHMLLEHKMERPGLKRVGPLATTSPVLCKKGSAPTAPNGCTGDANGHSQAEAPQMPTT</sequence>
<feature type="chain" id="PRO_0000324627" description="Inositol-3-phosphate synthase 1">
    <location>
        <begin position="1"/>
        <end position="557"/>
    </location>
</feature>
<feature type="region of interest" description="Disordered" evidence="4">
    <location>
        <begin position="527"/>
        <end position="557"/>
    </location>
</feature>
<feature type="binding site" evidence="1">
    <location>
        <position position="67"/>
    </location>
    <ligand>
        <name>NAD(+)</name>
        <dbReference type="ChEBI" id="CHEBI:57540"/>
    </ligand>
</feature>
<feature type="binding site" evidence="1">
    <location>
        <position position="68"/>
    </location>
    <ligand>
        <name>NAD(+)</name>
        <dbReference type="ChEBI" id="CHEBI:57540"/>
    </ligand>
</feature>
<feature type="binding site" evidence="1">
    <location>
        <position position="69"/>
    </location>
    <ligand>
        <name>NAD(+)</name>
        <dbReference type="ChEBI" id="CHEBI:57540"/>
    </ligand>
</feature>
<feature type="binding site" evidence="1">
    <location>
        <position position="70"/>
    </location>
    <ligand>
        <name>NAD(+)</name>
        <dbReference type="ChEBI" id="CHEBI:57540"/>
    </ligand>
</feature>
<feature type="binding site" evidence="1">
    <location>
        <position position="141"/>
    </location>
    <ligand>
        <name>NAD(+)</name>
        <dbReference type="ChEBI" id="CHEBI:57540"/>
    </ligand>
</feature>
<feature type="binding site" evidence="1">
    <location>
        <position position="177"/>
    </location>
    <ligand>
        <name>NAD(+)</name>
        <dbReference type="ChEBI" id="CHEBI:57540"/>
    </ligand>
</feature>
<feature type="binding site" evidence="1">
    <location>
        <position position="178"/>
    </location>
    <ligand>
        <name>NAD(+)</name>
        <dbReference type="ChEBI" id="CHEBI:57540"/>
    </ligand>
</feature>
<feature type="binding site" evidence="1">
    <location>
        <position position="188"/>
    </location>
    <ligand>
        <name>NAD(+)</name>
        <dbReference type="ChEBI" id="CHEBI:57540"/>
    </ligand>
</feature>
<feature type="binding site" evidence="1">
    <location>
        <position position="191"/>
    </location>
    <ligand>
        <name>NAD(+)</name>
        <dbReference type="ChEBI" id="CHEBI:57540"/>
    </ligand>
</feature>
<feature type="binding site" evidence="1">
    <location>
        <position position="228"/>
    </location>
    <ligand>
        <name>NAD(+)</name>
        <dbReference type="ChEBI" id="CHEBI:57540"/>
    </ligand>
</feature>
<feature type="binding site" evidence="1">
    <location>
        <position position="229"/>
    </location>
    <ligand>
        <name>NAD(+)</name>
        <dbReference type="ChEBI" id="CHEBI:57540"/>
    </ligand>
</feature>
<feature type="binding site" evidence="1">
    <location>
        <position position="230"/>
    </location>
    <ligand>
        <name>NAD(+)</name>
        <dbReference type="ChEBI" id="CHEBI:57540"/>
    </ligand>
</feature>
<feature type="binding site" evidence="1">
    <location>
        <position position="231"/>
    </location>
    <ligand>
        <name>NAD(+)</name>
        <dbReference type="ChEBI" id="CHEBI:57540"/>
    </ligand>
</feature>
<feature type="binding site" evidence="1">
    <location>
        <position position="278"/>
    </location>
    <ligand>
        <name>NAD(+)</name>
        <dbReference type="ChEBI" id="CHEBI:57540"/>
    </ligand>
</feature>
<feature type="binding site" evidence="1">
    <location>
        <position position="279"/>
    </location>
    <ligand>
        <name>NAD(+)</name>
        <dbReference type="ChEBI" id="CHEBI:57540"/>
    </ligand>
</feature>
<feature type="binding site" evidence="1">
    <location>
        <position position="303"/>
    </location>
    <ligand>
        <name>NAD(+)</name>
        <dbReference type="ChEBI" id="CHEBI:57540"/>
    </ligand>
</feature>
<feature type="binding site" evidence="1">
    <location>
        <position position="306"/>
    </location>
    <ligand>
        <name>NAD(+)</name>
        <dbReference type="ChEBI" id="CHEBI:57540"/>
    </ligand>
</feature>
<feature type="binding site" evidence="1">
    <location>
        <position position="337"/>
    </location>
    <ligand>
        <name>NAD(+)</name>
        <dbReference type="ChEBI" id="CHEBI:57540"/>
    </ligand>
</feature>
<feature type="binding site" evidence="1">
    <location>
        <position position="338"/>
    </location>
    <ligand>
        <name>NAD(+)</name>
        <dbReference type="ChEBI" id="CHEBI:57540"/>
    </ligand>
</feature>
<feature type="binding site" evidence="1">
    <location>
        <position position="339"/>
    </location>
    <ligand>
        <name>NAD(+)</name>
        <dbReference type="ChEBI" id="CHEBI:57540"/>
    </ligand>
</feature>
<feature type="binding site" evidence="1">
    <location>
        <position position="352"/>
    </location>
    <ligand>
        <name>NAD(+)</name>
        <dbReference type="ChEBI" id="CHEBI:57540"/>
    </ligand>
</feature>
<feature type="binding site" evidence="1">
    <location>
        <position position="390"/>
    </location>
    <ligand>
        <name>NAD(+)</name>
        <dbReference type="ChEBI" id="CHEBI:57540"/>
    </ligand>
</feature>
<feature type="binding site" evidence="1">
    <location>
        <position position="391"/>
    </location>
    <ligand>
        <name>NAD(+)</name>
        <dbReference type="ChEBI" id="CHEBI:57540"/>
    </ligand>
</feature>
<feature type="binding site" evidence="1">
    <location>
        <position position="419"/>
    </location>
    <ligand>
        <name>NAD(+)</name>
        <dbReference type="ChEBI" id="CHEBI:57540"/>
    </ligand>
</feature>
<feature type="binding site" evidence="1">
    <location>
        <position position="420"/>
    </location>
    <ligand>
        <name>NAD(+)</name>
        <dbReference type="ChEBI" id="CHEBI:57540"/>
    </ligand>
</feature>
<feature type="modified residue" description="Phosphoserine" evidence="3">
    <location>
        <position position="279"/>
    </location>
</feature>
<feature type="modified residue" description="Phosphoserine" evidence="3">
    <location>
        <position position="357"/>
    </location>
</feature>
<feature type="modified residue" description="Phosphoserine" evidence="2">
    <location>
        <position position="523"/>
    </location>
</feature>
<keyword id="KW-0963">Cytoplasm</keyword>
<keyword id="KW-0398">Inositol biosynthesis</keyword>
<keyword id="KW-0413">Isomerase</keyword>
<keyword id="KW-0444">Lipid biosynthesis</keyword>
<keyword id="KW-0443">Lipid metabolism</keyword>
<keyword id="KW-0520">NAD</keyword>
<keyword id="KW-0594">Phospholipid biosynthesis</keyword>
<keyword id="KW-1208">Phospholipid metabolism</keyword>
<keyword id="KW-0597">Phosphoprotein</keyword>
<keyword id="KW-1185">Reference proteome</keyword>
<accession>Q2NL29</accession>
<reference key="1">
    <citation type="submission" date="2005-12" db="EMBL/GenBank/DDBJ databases">
        <authorList>
            <consortium name="NIH - Mammalian Gene Collection (MGC) project"/>
        </authorList>
    </citation>
    <scope>NUCLEOTIDE SEQUENCE [LARGE SCALE MRNA]</scope>
    <source>
        <strain>Crossbred X Angus</strain>
        <tissue>Liver</tissue>
    </source>
</reference>
<reference key="2">
    <citation type="journal article" date="1977" name="J. Biol. Chem.">
        <title>Incubations of testis myo-inositol-1-phosphate synthase with D-(5-18O)glucose 6-phosphate and with H218O show no evidence of Schiff base formation.</title>
        <authorList>
            <person name="Sherman W.R."/>
            <person name="Rasheed A."/>
            <person name="Mauck L.A."/>
            <person name="Wiecko J."/>
        </authorList>
    </citation>
    <scope>FUNCTION</scope>
    <scope>CATALYTIC ACTIVITY</scope>
    <scope>COFACTOR</scope>
    <scope>TISSUE SPECIFICITY</scope>
</reference>
<proteinExistence type="evidence at protein level"/>
<evidence type="ECO:0000250" key="1">
    <source>
        <dbReference type="UniProtKB" id="P11986"/>
    </source>
</evidence>
<evidence type="ECO:0000250" key="2">
    <source>
        <dbReference type="UniProtKB" id="Q6AYK3"/>
    </source>
</evidence>
<evidence type="ECO:0000250" key="3">
    <source>
        <dbReference type="UniProtKB" id="Q9NPH2"/>
    </source>
</evidence>
<evidence type="ECO:0000256" key="4">
    <source>
        <dbReference type="SAM" id="MobiDB-lite"/>
    </source>
</evidence>
<evidence type="ECO:0000269" key="5">
    <source>
    </source>
</evidence>
<evidence type="ECO:0000305" key="6"/>